<sequence>MRWITRPGWPGNLLALAAGASTLLALAPFDIWPLAVLSIAVLYLGLRELSPRQAMWRGWWFGFGLYGAGTWWIYVSMNTYGGASPLLAIVLLLAFFAALAWFFALPTWLWARWLRRNEAPLADALCFAALWLLQEAFRGWFLTGFPWLYAGYSQLDGPLAGLAPLGGVWLISFTLALTAALLCNLHRLRPRPSFLAVASVLLLAPWGLGLALKGHAWTIPAGDPLKVAAIQGNVEQDLKWDPAHIDAQLALYRDLSFSSRPVDLLVWPETAVPVLKDQAQGYIDVMGRFAAERHSALITGVPVREEVHHQRRYYNGITVTGEGDGTYLKQKLVPFGEYVPLQDVLRGAIEFFNLPMSDFARGPEDQPLLQAKGYQIAPYICYEVVYPEFAAGLAARSDLLLTISNDTWFGKSIGPLQHLQMAQMRALEAGRWMIRATNNGVTALIDPFGRITTQIPQFQQAVLYGEVVPMQQLTPYLQWRSWPLAIVCALLLGWALLAGRIAKTV</sequence>
<protein>
    <recommendedName>
        <fullName evidence="1">Apolipoprotein N-acyltransferase</fullName>
        <shortName evidence="1">ALP N-acyltransferase</shortName>
        <ecNumber evidence="1">2.3.1.269</ecNumber>
    </recommendedName>
</protein>
<dbReference type="EC" id="2.3.1.269" evidence="1"/>
<dbReference type="EMBL" id="AE015451">
    <property type="protein sequence ID" value="AAN70359.1"/>
    <property type="molecule type" value="Genomic_DNA"/>
</dbReference>
<dbReference type="RefSeq" id="NP_746895.1">
    <property type="nucleotide sequence ID" value="NC_002947.4"/>
</dbReference>
<dbReference type="RefSeq" id="WP_010955409.1">
    <property type="nucleotide sequence ID" value="NZ_CP169744.1"/>
</dbReference>
<dbReference type="SMR" id="Q88DN4"/>
<dbReference type="STRING" id="160488.PP_4790"/>
<dbReference type="PaxDb" id="160488-PP_4790"/>
<dbReference type="GeneID" id="83682517"/>
<dbReference type="KEGG" id="ppu:PP_4790"/>
<dbReference type="PATRIC" id="fig|160488.4.peg.5109"/>
<dbReference type="eggNOG" id="COG0815">
    <property type="taxonomic scope" value="Bacteria"/>
</dbReference>
<dbReference type="HOGENOM" id="CLU_019563_3_0_6"/>
<dbReference type="OrthoDB" id="9804277at2"/>
<dbReference type="PhylomeDB" id="Q88DN4"/>
<dbReference type="BioCyc" id="PPUT160488:G1G01-5127-MONOMER"/>
<dbReference type="UniPathway" id="UPA00666"/>
<dbReference type="Proteomes" id="UP000000556">
    <property type="component" value="Chromosome"/>
</dbReference>
<dbReference type="GO" id="GO:0005886">
    <property type="term" value="C:plasma membrane"/>
    <property type="evidence" value="ECO:0007669"/>
    <property type="project" value="UniProtKB-SubCell"/>
</dbReference>
<dbReference type="GO" id="GO:0016410">
    <property type="term" value="F:N-acyltransferase activity"/>
    <property type="evidence" value="ECO:0007669"/>
    <property type="project" value="UniProtKB-UniRule"/>
</dbReference>
<dbReference type="GO" id="GO:0042158">
    <property type="term" value="P:lipoprotein biosynthetic process"/>
    <property type="evidence" value="ECO:0007669"/>
    <property type="project" value="UniProtKB-UniRule"/>
</dbReference>
<dbReference type="CDD" id="cd07571">
    <property type="entry name" value="ALP_N-acyl_transferase"/>
    <property type="match status" value="1"/>
</dbReference>
<dbReference type="Gene3D" id="3.60.110.10">
    <property type="entry name" value="Carbon-nitrogen hydrolase"/>
    <property type="match status" value="1"/>
</dbReference>
<dbReference type="HAMAP" id="MF_01148">
    <property type="entry name" value="Lnt"/>
    <property type="match status" value="1"/>
</dbReference>
<dbReference type="InterPro" id="IPR004563">
    <property type="entry name" value="Apolipo_AcylTrfase"/>
</dbReference>
<dbReference type="InterPro" id="IPR003010">
    <property type="entry name" value="C-N_Hydrolase"/>
</dbReference>
<dbReference type="InterPro" id="IPR036526">
    <property type="entry name" value="C-N_Hydrolase_sf"/>
</dbReference>
<dbReference type="InterPro" id="IPR045378">
    <property type="entry name" value="LNT_N"/>
</dbReference>
<dbReference type="NCBIfam" id="TIGR00546">
    <property type="entry name" value="lnt"/>
    <property type="match status" value="1"/>
</dbReference>
<dbReference type="PANTHER" id="PTHR38686">
    <property type="entry name" value="APOLIPOPROTEIN N-ACYLTRANSFERASE"/>
    <property type="match status" value="1"/>
</dbReference>
<dbReference type="PANTHER" id="PTHR38686:SF1">
    <property type="entry name" value="APOLIPOPROTEIN N-ACYLTRANSFERASE"/>
    <property type="match status" value="1"/>
</dbReference>
<dbReference type="Pfam" id="PF00795">
    <property type="entry name" value="CN_hydrolase"/>
    <property type="match status" value="1"/>
</dbReference>
<dbReference type="Pfam" id="PF20154">
    <property type="entry name" value="LNT_N"/>
    <property type="match status" value="1"/>
</dbReference>
<dbReference type="SUPFAM" id="SSF56317">
    <property type="entry name" value="Carbon-nitrogen hydrolase"/>
    <property type="match status" value="1"/>
</dbReference>
<dbReference type="PROSITE" id="PS50263">
    <property type="entry name" value="CN_HYDROLASE"/>
    <property type="match status" value="1"/>
</dbReference>
<comment type="function">
    <text evidence="1">Catalyzes the phospholipid dependent N-acylation of the N-terminal cysteine of apolipoprotein, the last step in lipoprotein maturation.</text>
</comment>
<comment type="catalytic activity">
    <reaction evidence="1">
        <text>N-terminal S-1,2-diacyl-sn-glyceryl-L-cysteinyl-[lipoprotein] + a glycerophospholipid = N-acyl-S-1,2-diacyl-sn-glyceryl-L-cysteinyl-[lipoprotein] + a 2-acyl-sn-glycero-3-phospholipid + H(+)</text>
        <dbReference type="Rhea" id="RHEA:48228"/>
        <dbReference type="Rhea" id="RHEA-COMP:14681"/>
        <dbReference type="Rhea" id="RHEA-COMP:14684"/>
        <dbReference type="ChEBI" id="CHEBI:15378"/>
        <dbReference type="ChEBI" id="CHEBI:136912"/>
        <dbReference type="ChEBI" id="CHEBI:140656"/>
        <dbReference type="ChEBI" id="CHEBI:140657"/>
        <dbReference type="ChEBI" id="CHEBI:140660"/>
        <dbReference type="EC" id="2.3.1.269"/>
    </reaction>
</comment>
<comment type="pathway">
    <text evidence="1">Protein modification; lipoprotein biosynthesis (N-acyl transfer).</text>
</comment>
<comment type="subcellular location">
    <subcellularLocation>
        <location evidence="1">Cell inner membrane</location>
        <topology evidence="1">Multi-pass membrane protein</topology>
    </subcellularLocation>
</comment>
<comment type="similarity">
    <text evidence="1">Belongs to the CN hydrolase family. Apolipoprotein N-acyltransferase subfamily.</text>
</comment>
<reference key="1">
    <citation type="journal article" date="2002" name="Environ. Microbiol.">
        <title>Complete genome sequence and comparative analysis of the metabolically versatile Pseudomonas putida KT2440.</title>
        <authorList>
            <person name="Nelson K.E."/>
            <person name="Weinel C."/>
            <person name="Paulsen I.T."/>
            <person name="Dodson R.J."/>
            <person name="Hilbert H."/>
            <person name="Martins dos Santos V.A.P."/>
            <person name="Fouts D.E."/>
            <person name="Gill S.R."/>
            <person name="Pop M."/>
            <person name="Holmes M."/>
            <person name="Brinkac L.M."/>
            <person name="Beanan M.J."/>
            <person name="DeBoy R.T."/>
            <person name="Daugherty S.C."/>
            <person name="Kolonay J.F."/>
            <person name="Madupu R."/>
            <person name="Nelson W.C."/>
            <person name="White O."/>
            <person name="Peterson J.D."/>
            <person name="Khouri H.M."/>
            <person name="Hance I."/>
            <person name="Chris Lee P."/>
            <person name="Holtzapple E.K."/>
            <person name="Scanlan D."/>
            <person name="Tran K."/>
            <person name="Moazzez A."/>
            <person name="Utterback T.R."/>
            <person name="Rizzo M."/>
            <person name="Lee K."/>
            <person name="Kosack D."/>
            <person name="Moestl D."/>
            <person name="Wedler H."/>
            <person name="Lauber J."/>
            <person name="Stjepandic D."/>
            <person name="Hoheisel J."/>
            <person name="Straetz M."/>
            <person name="Heim S."/>
            <person name="Kiewitz C."/>
            <person name="Eisen J.A."/>
            <person name="Timmis K.N."/>
            <person name="Duesterhoeft A."/>
            <person name="Tuemmler B."/>
            <person name="Fraser C.M."/>
        </authorList>
    </citation>
    <scope>NUCLEOTIDE SEQUENCE [LARGE SCALE GENOMIC DNA]</scope>
    <source>
        <strain>ATCC 47054 / DSM 6125 / CFBP 8728 / NCIMB 11950 / KT2440</strain>
    </source>
</reference>
<gene>
    <name evidence="1" type="primary">lnt</name>
    <name type="ordered locus">PP_4790</name>
</gene>
<proteinExistence type="inferred from homology"/>
<name>LNT_PSEPK</name>
<accession>Q88DN4</accession>
<organism>
    <name type="scientific">Pseudomonas putida (strain ATCC 47054 / DSM 6125 / CFBP 8728 / NCIMB 11950 / KT2440)</name>
    <dbReference type="NCBI Taxonomy" id="160488"/>
    <lineage>
        <taxon>Bacteria</taxon>
        <taxon>Pseudomonadati</taxon>
        <taxon>Pseudomonadota</taxon>
        <taxon>Gammaproteobacteria</taxon>
        <taxon>Pseudomonadales</taxon>
        <taxon>Pseudomonadaceae</taxon>
        <taxon>Pseudomonas</taxon>
    </lineage>
</organism>
<feature type="chain" id="PRO_0000178085" description="Apolipoprotein N-acyltransferase">
    <location>
        <begin position="1"/>
        <end position="505"/>
    </location>
</feature>
<feature type="transmembrane region" description="Helical" evidence="1">
    <location>
        <begin position="23"/>
        <end position="43"/>
    </location>
</feature>
<feature type="transmembrane region" description="Helical" evidence="1">
    <location>
        <begin position="58"/>
        <end position="78"/>
    </location>
</feature>
<feature type="transmembrane region" description="Helical" evidence="1">
    <location>
        <begin position="85"/>
        <end position="105"/>
    </location>
</feature>
<feature type="transmembrane region" description="Helical" evidence="1">
    <location>
        <begin position="125"/>
        <end position="145"/>
    </location>
</feature>
<feature type="transmembrane region" description="Helical" evidence="1">
    <location>
        <begin position="162"/>
        <end position="182"/>
    </location>
</feature>
<feature type="transmembrane region" description="Helical" evidence="1">
    <location>
        <begin position="192"/>
        <end position="212"/>
    </location>
</feature>
<feature type="transmembrane region" description="Helical" evidence="1">
    <location>
        <begin position="482"/>
        <end position="502"/>
    </location>
</feature>
<feature type="domain" description="CN hydrolase" evidence="1">
    <location>
        <begin position="230"/>
        <end position="469"/>
    </location>
</feature>
<feature type="active site" description="Proton acceptor" evidence="1">
    <location>
        <position position="269"/>
    </location>
</feature>
<feature type="active site" evidence="1">
    <location>
        <position position="329"/>
    </location>
</feature>
<feature type="active site" description="Nucleophile" evidence="1">
    <location>
        <position position="381"/>
    </location>
</feature>
<keyword id="KW-0012">Acyltransferase</keyword>
<keyword id="KW-0997">Cell inner membrane</keyword>
<keyword id="KW-1003">Cell membrane</keyword>
<keyword id="KW-0472">Membrane</keyword>
<keyword id="KW-1185">Reference proteome</keyword>
<keyword id="KW-0808">Transferase</keyword>
<keyword id="KW-0812">Transmembrane</keyword>
<keyword id="KW-1133">Transmembrane helix</keyword>
<evidence type="ECO:0000255" key="1">
    <source>
        <dbReference type="HAMAP-Rule" id="MF_01148"/>
    </source>
</evidence>